<organism>
    <name type="scientific">Lactobacillus gasseri (strain ATCC 33323 / DSM 20243 / BCRC 14619 / CIP 102991 / JCM 1131 / KCTC 3163 / NCIMB 11718 / NCTC 13722 / AM63)</name>
    <dbReference type="NCBI Taxonomy" id="324831"/>
    <lineage>
        <taxon>Bacteria</taxon>
        <taxon>Bacillati</taxon>
        <taxon>Bacillota</taxon>
        <taxon>Bacilli</taxon>
        <taxon>Lactobacillales</taxon>
        <taxon>Lactobacillaceae</taxon>
        <taxon>Lactobacillus</taxon>
    </lineage>
</organism>
<name>SYA_LACGA</name>
<protein>
    <recommendedName>
        <fullName evidence="1">Alanine--tRNA ligase</fullName>
        <ecNumber evidence="1">6.1.1.7</ecNumber>
    </recommendedName>
    <alternativeName>
        <fullName evidence="1">Alanyl-tRNA synthetase</fullName>
        <shortName evidence="1">AlaRS</shortName>
    </alternativeName>
</protein>
<comment type="function">
    <text evidence="1">Catalyzes the attachment of alanine to tRNA(Ala) in a two-step reaction: alanine is first activated by ATP to form Ala-AMP and then transferred to the acceptor end of tRNA(Ala). Also edits incorrectly charged Ser-tRNA(Ala) and Gly-tRNA(Ala) via its editing domain.</text>
</comment>
<comment type="catalytic activity">
    <reaction evidence="1">
        <text>tRNA(Ala) + L-alanine + ATP = L-alanyl-tRNA(Ala) + AMP + diphosphate</text>
        <dbReference type="Rhea" id="RHEA:12540"/>
        <dbReference type="Rhea" id="RHEA-COMP:9657"/>
        <dbReference type="Rhea" id="RHEA-COMP:9923"/>
        <dbReference type="ChEBI" id="CHEBI:30616"/>
        <dbReference type="ChEBI" id="CHEBI:33019"/>
        <dbReference type="ChEBI" id="CHEBI:57972"/>
        <dbReference type="ChEBI" id="CHEBI:78442"/>
        <dbReference type="ChEBI" id="CHEBI:78497"/>
        <dbReference type="ChEBI" id="CHEBI:456215"/>
        <dbReference type="EC" id="6.1.1.7"/>
    </reaction>
</comment>
<comment type="cofactor">
    <cofactor evidence="1">
        <name>Zn(2+)</name>
        <dbReference type="ChEBI" id="CHEBI:29105"/>
    </cofactor>
    <text evidence="1">Binds 1 zinc ion per subunit.</text>
</comment>
<comment type="subcellular location">
    <subcellularLocation>
        <location evidence="1">Cytoplasm</location>
    </subcellularLocation>
</comment>
<comment type="domain">
    <text evidence="1">Consists of three domains; the N-terminal catalytic domain, the editing domain and the C-terminal C-Ala domain. The editing domain removes incorrectly charged amino acids, while the C-Ala domain, along with tRNA(Ala), serves as a bridge to cooperatively bring together the editing and aminoacylation centers thus stimulating deacylation of misacylated tRNAs.</text>
</comment>
<comment type="similarity">
    <text evidence="1">Belongs to the class-II aminoacyl-tRNA synthetase family.</text>
</comment>
<keyword id="KW-0030">Aminoacyl-tRNA synthetase</keyword>
<keyword id="KW-0067">ATP-binding</keyword>
<keyword id="KW-0963">Cytoplasm</keyword>
<keyword id="KW-0436">Ligase</keyword>
<keyword id="KW-0479">Metal-binding</keyword>
<keyword id="KW-0547">Nucleotide-binding</keyword>
<keyword id="KW-0648">Protein biosynthesis</keyword>
<keyword id="KW-0694">RNA-binding</keyword>
<keyword id="KW-0820">tRNA-binding</keyword>
<keyword id="KW-0862">Zinc</keyword>
<reference key="1">
    <citation type="journal article" date="2006" name="Proc. Natl. Acad. Sci. U.S.A.">
        <title>Comparative genomics of the lactic acid bacteria.</title>
        <authorList>
            <person name="Makarova K.S."/>
            <person name="Slesarev A."/>
            <person name="Wolf Y.I."/>
            <person name="Sorokin A."/>
            <person name="Mirkin B."/>
            <person name="Koonin E.V."/>
            <person name="Pavlov A."/>
            <person name="Pavlova N."/>
            <person name="Karamychev V."/>
            <person name="Polouchine N."/>
            <person name="Shakhova V."/>
            <person name="Grigoriev I."/>
            <person name="Lou Y."/>
            <person name="Rohksar D."/>
            <person name="Lucas S."/>
            <person name="Huang K."/>
            <person name="Goodstein D.M."/>
            <person name="Hawkins T."/>
            <person name="Plengvidhya V."/>
            <person name="Welker D."/>
            <person name="Hughes J."/>
            <person name="Goh Y."/>
            <person name="Benson A."/>
            <person name="Baldwin K."/>
            <person name="Lee J.-H."/>
            <person name="Diaz-Muniz I."/>
            <person name="Dosti B."/>
            <person name="Smeianov V."/>
            <person name="Wechter W."/>
            <person name="Barabote R."/>
            <person name="Lorca G."/>
            <person name="Altermann E."/>
            <person name="Barrangou R."/>
            <person name="Ganesan B."/>
            <person name="Xie Y."/>
            <person name="Rawsthorne H."/>
            <person name="Tamir D."/>
            <person name="Parker C."/>
            <person name="Breidt F."/>
            <person name="Broadbent J.R."/>
            <person name="Hutkins R."/>
            <person name="O'Sullivan D."/>
            <person name="Steele J."/>
            <person name="Unlu G."/>
            <person name="Saier M.H. Jr."/>
            <person name="Klaenhammer T."/>
            <person name="Richardson P."/>
            <person name="Kozyavkin S."/>
            <person name="Weimer B.C."/>
            <person name="Mills D.A."/>
        </authorList>
    </citation>
    <scope>NUCLEOTIDE SEQUENCE [LARGE SCALE GENOMIC DNA]</scope>
    <source>
        <strain>ATCC 33323 / DSM 20243 / BCRC 14619 / CIP 102991 / JCM 1131 / KCTC 3163 / NCIMB 11718 / NCTC 13722 / AM63</strain>
    </source>
</reference>
<dbReference type="EC" id="6.1.1.7" evidence="1"/>
<dbReference type="EMBL" id="CP000413">
    <property type="protein sequence ID" value="ABJ59826.1"/>
    <property type="molecule type" value="Genomic_DNA"/>
</dbReference>
<dbReference type="RefSeq" id="WP_003647718.1">
    <property type="nucleotide sequence ID" value="NZ_WBMG01000012.1"/>
</dbReference>
<dbReference type="SMR" id="Q045P6"/>
<dbReference type="GeneID" id="29639521"/>
<dbReference type="KEGG" id="lga:LGAS_0421"/>
<dbReference type="HOGENOM" id="CLU_004485_1_1_9"/>
<dbReference type="BioCyc" id="LGAS324831:G1G6Y-421-MONOMER"/>
<dbReference type="Proteomes" id="UP000000664">
    <property type="component" value="Chromosome"/>
</dbReference>
<dbReference type="GO" id="GO:0005829">
    <property type="term" value="C:cytosol"/>
    <property type="evidence" value="ECO:0007669"/>
    <property type="project" value="TreeGrafter"/>
</dbReference>
<dbReference type="GO" id="GO:0004813">
    <property type="term" value="F:alanine-tRNA ligase activity"/>
    <property type="evidence" value="ECO:0007669"/>
    <property type="project" value="UniProtKB-UniRule"/>
</dbReference>
<dbReference type="GO" id="GO:0002161">
    <property type="term" value="F:aminoacyl-tRNA deacylase activity"/>
    <property type="evidence" value="ECO:0007669"/>
    <property type="project" value="TreeGrafter"/>
</dbReference>
<dbReference type="GO" id="GO:0005524">
    <property type="term" value="F:ATP binding"/>
    <property type="evidence" value="ECO:0007669"/>
    <property type="project" value="UniProtKB-UniRule"/>
</dbReference>
<dbReference type="GO" id="GO:0140096">
    <property type="term" value="F:catalytic activity, acting on a protein"/>
    <property type="evidence" value="ECO:0007669"/>
    <property type="project" value="UniProtKB-ARBA"/>
</dbReference>
<dbReference type="GO" id="GO:0016740">
    <property type="term" value="F:transferase activity"/>
    <property type="evidence" value="ECO:0007669"/>
    <property type="project" value="UniProtKB-ARBA"/>
</dbReference>
<dbReference type="GO" id="GO:0000049">
    <property type="term" value="F:tRNA binding"/>
    <property type="evidence" value="ECO:0007669"/>
    <property type="project" value="UniProtKB-KW"/>
</dbReference>
<dbReference type="GO" id="GO:0008270">
    <property type="term" value="F:zinc ion binding"/>
    <property type="evidence" value="ECO:0007669"/>
    <property type="project" value="UniProtKB-UniRule"/>
</dbReference>
<dbReference type="GO" id="GO:0006419">
    <property type="term" value="P:alanyl-tRNA aminoacylation"/>
    <property type="evidence" value="ECO:0007669"/>
    <property type="project" value="UniProtKB-UniRule"/>
</dbReference>
<dbReference type="CDD" id="cd00673">
    <property type="entry name" value="AlaRS_core"/>
    <property type="match status" value="1"/>
</dbReference>
<dbReference type="FunFam" id="3.10.310.40:FF:000001">
    <property type="entry name" value="Alanine--tRNA ligase"/>
    <property type="match status" value="1"/>
</dbReference>
<dbReference type="FunFam" id="3.30.54.20:FF:000001">
    <property type="entry name" value="Alanine--tRNA ligase"/>
    <property type="match status" value="1"/>
</dbReference>
<dbReference type="FunFam" id="3.30.930.10:FF:000046">
    <property type="entry name" value="Alanine--tRNA ligase"/>
    <property type="match status" value="1"/>
</dbReference>
<dbReference type="FunFam" id="3.30.980.10:FF:000004">
    <property type="entry name" value="Alanine--tRNA ligase, cytoplasmic"/>
    <property type="match status" value="1"/>
</dbReference>
<dbReference type="Gene3D" id="2.40.30.130">
    <property type="match status" value="1"/>
</dbReference>
<dbReference type="Gene3D" id="3.10.310.40">
    <property type="match status" value="1"/>
</dbReference>
<dbReference type="Gene3D" id="3.30.54.20">
    <property type="match status" value="1"/>
</dbReference>
<dbReference type="Gene3D" id="6.10.250.550">
    <property type="match status" value="1"/>
</dbReference>
<dbReference type="Gene3D" id="3.30.930.10">
    <property type="entry name" value="Bira Bifunctional Protein, Domain 2"/>
    <property type="match status" value="1"/>
</dbReference>
<dbReference type="Gene3D" id="3.30.980.10">
    <property type="entry name" value="Threonyl-trna Synthetase, Chain A, domain 2"/>
    <property type="match status" value="1"/>
</dbReference>
<dbReference type="HAMAP" id="MF_00036_B">
    <property type="entry name" value="Ala_tRNA_synth_B"/>
    <property type="match status" value="1"/>
</dbReference>
<dbReference type="InterPro" id="IPR045864">
    <property type="entry name" value="aa-tRNA-synth_II/BPL/LPL"/>
</dbReference>
<dbReference type="InterPro" id="IPR002318">
    <property type="entry name" value="Ala-tRNA-lgiase_IIc"/>
</dbReference>
<dbReference type="InterPro" id="IPR018162">
    <property type="entry name" value="Ala-tRNA-ligase_IIc_anticod-bd"/>
</dbReference>
<dbReference type="InterPro" id="IPR018165">
    <property type="entry name" value="Ala-tRNA-synth_IIc_core"/>
</dbReference>
<dbReference type="InterPro" id="IPR018164">
    <property type="entry name" value="Ala-tRNA-synth_IIc_N"/>
</dbReference>
<dbReference type="InterPro" id="IPR050058">
    <property type="entry name" value="Ala-tRNA_ligase"/>
</dbReference>
<dbReference type="InterPro" id="IPR023033">
    <property type="entry name" value="Ala_tRNA_ligase_euk/bac"/>
</dbReference>
<dbReference type="InterPro" id="IPR003156">
    <property type="entry name" value="DHHA1_dom"/>
</dbReference>
<dbReference type="InterPro" id="IPR018163">
    <property type="entry name" value="Thr/Ala-tRNA-synth_IIc_edit"/>
</dbReference>
<dbReference type="InterPro" id="IPR009000">
    <property type="entry name" value="Transl_B-barrel_sf"/>
</dbReference>
<dbReference type="InterPro" id="IPR012947">
    <property type="entry name" value="tRNA_SAD"/>
</dbReference>
<dbReference type="NCBIfam" id="TIGR00344">
    <property type="entry name" value="alaS"/>
    <property type="match status" value="1"/>
</dbReference>
<dbReference type="PANTHER" id="PTHR11777:SF9">
    <property type="entry name" value="ALANINE--TRNA LIGASE, CYTOPLASMIC"/>
    <property type="match status" value="1"/>
</dbReference>
<dbReference type="PANTHER" id="PTHR11777">
    <property type="entry name" value="ALANYL-TRNA SYNTHETASE"/>
    <property type="match status" value="1"/>
</dbReference>
<dbReference type="Pfam" id="PF02272">
    <property type="entry name" value="DHHA1"/>
    <property type="match status" value="1"/>
</dbReference>
<dbReference type="Pfam" id="PF01411">
    <property type="entry name" value="tRNA-synt_2c"/>
    <property type="match status" value="1"/>
</dbReference>
<dbReference type="Pfam" id="PF07973">
    <property type="entry name" value="tRNA_SAD"/>
    <property type="match status" value="1"/>
</dbReference>
<dbReference type="PRINTS" id="PR00980">
    <property type="entry name" value="TRNASYNTHALA"/>
</dbReference>
<dbReference type="SMART" id="SM00863">
    <property type="entry name" value="tRNA_SAD"/>
    <property type="match status" value="1"/>
</dbReference>
<dbReference type="SUPFAM" id="SSF55681">
    <property type="entry name" value="Class II aaRS and biotin synthetases"/>
    <property type="match status" value="1"/>
</dbReference>
<dbReference type="SUPFAM" id="SSF101353">
    <property type="entry name" value="Putative anticodon-binding domain of alanyl-tRNA synthetase (AlaRS)"/>
    <property type="match status" value="1"/>
</dbReference>
<dbReference type="SUPFAM" id="SSF55186">
    <property type="entry name" value="ThrRS/AlaRS common domain"/>
    <property type="match status" value="1"/>
</dbReference>
<dbReference type="SUPFAM" id="SSF50447">
    <property type="entry name" value="Translation proteins"/>
    <property type="match status" value="1"/>
</dbReference>
<dbReference type="PROSITE" id="PS50860">
    <property type="entry name" value="AA_TRNA_LIGASE_II_ALA"/>
    <property type="match status" value="1"/>
</dbReference>
<evidence type="ECO:0000255" key="1">
    <source>
        <dbReference type="HAMAP-Rule" id="MF_00036"/>
    </source>
</evidence>
<feature type="chain" id="PRO_0000347647" description="Alanine--tRNA ligase">
    <location>
        <begin position="1"/>
        <end position="882"/>
    </location>
</feature>
<feature type="binding site" evidence="1">
    <location>
        <position position="568"/>
    </location>
    <ligand>
        <name>Zn(2+)</name>
        <dbReference type="ChEBI" id="CHEBI:29105"/>
    </ligand>
</feature>
<feature type="binding site" evidence="1">
    <location>
        <position position="572"/>
    </location>
    <ligand>
        <name>Zn(2+)</name>
        <dbReference type="ChEBI" id="CHEBI:29105"/>
    </ligand>
</feature>
<feature type="binding site" evidence="1">
    <location>
        <position position="670"/>
    </location>
    <ligand>
        <name>Zn(2+)</name>
        <dbReference type="ChEBI" id="CHEBI:29105"/>
    </ligand>
</feature>
<feature type="binding site" evidence="1">
    <location>
        <position position="674"/>
    </location>
    <ligand>
        <name>Zn(2+)</name>
        <dbReference type="ChEBI" id="CHEBI:29105"/>
    </ligand>
</feature>
<proteinExistence type="inferred from homology"/>
<accession>Q045P6</accession>
<sequence length="882" mass="98342">MKQLTSSQVRQMFLDFFKEHGHMVMPSASLIPQDDPTLLWINSGVATMKKYFDGSVVPKNHRITSSQKSIRTNDIENVGKTARHQTFFEMLGNFSVGDYFKKEVIPWAWEFLTSPKWLGLDPDKLYVTVYPKDTEAYHMWHDVVGLPEDHIVKLEDNFWDIGEGPCGPDSEIFYDRGQENNDVAEDDPENFPGGENARYLEIWNIVFSQFNHLPNGKYVDQPHKNIDTGMGLERVVSIIQDAPTNFETDLFMPIIKETEKLSDGKKYAANKEDDVAFKIIADHVRAVSFAIADGALPSNSGRGYVLRRLIRRADLNGQRLGIKGAFLYKLVPVVGEIMKSHYPEVVDQQAFIQKVIKNEEERFQVTLSSGLNLLDNIIAEAKKSDDKTVSGKDAFKLFDTYGFPYELTFEAAQDAGLKVDKKGFDEEMKAQKERARKARGNLQSMGSQDVTLMNIKDKSEFEYGTLEEKHAKLIDIVVNDKLVDKADGEHATLIFDKTPFYAERGGQVADHGEILNQNGELVARVTDVQHAPNDQNLHFVDIILPLEKGQEYILKVDQKRRRGLKHNHTATHLLHAALREVLGTHTHQAGSLVEPDYLRFDFTSLEPMTKKEIANVEKIVNEKIWEEIPVKTTVTDPDTGLKMGALALFGEKYGDTVRVVQIDDFSTEFCGGTHCENTDQIGMLKIVSESAVGAGTRRIIAVTGPEAYKYVTDRDEILKEVQDEVKATKAEDVTNKISSLEEDLRASQKEAEQLKAQINKAKAGDLFNDVKQVKGLTVIAAQADVEGMNDLRELADNWKSSDKSDVLVLAAEVNGKANMVISLNDKAIKAGLKAGDLIKTAAPIFGGGGGGRPNMAQAGGKNPAGLKDAIAKVLQEVEEKQN</sequence>
<gene>
    <name evidence="1" type="primary">alaS</name>
    <name type="ordered locus">LGAS_0421</name>
</gene>